<dbReference type="EMBL" id="AE005674">
    <property type="protein sequence ID" value="AAN45265.1"/>
    <property type="molecule type" value="Genomic_DNA"/>
</dbReference>
<dbReference type="EMBL" id="AE014073">
    <property type="protein sequence ID" value="AAP18932.1"/>
    <property type="status" value="ALT_INIT"/>
    <property type="molecule type" value="Genomic_DNA"/>
</dbReference>
<dbReference type="RefSeq" id="WP_000956621.1">
    <property type="nucleotide sequence ID" value="NZ_CP123365.1"/>
</dbReference>
<dbReference type="SMR" id="Q83IY2"/>
<dbReference type="STRING" id="198214.SF3825"/>
<dbReference type="PaxDb" id="198214-SF3825"/>
<dbReference type="KEGG" id="sfl:SF3825"/>
<dbReference type="KEGG" id="sfx:S3943"/>
<dbReference type="PATRIC" id="fig|198214.7.peg.4513"/>
<dbReference type="HOGENOM" id="CLU_022130_0_0_6"/>
<dbReference type="Proteomes" id="UP000001006">
    <property type="component" value="Chromosome"/>
</dbReference>
<dbReference type="Proteomes" id="UP000002673">
    <property type="component" value="Chromosome"/>
</dbReference>
<dbReference type="GO" id="GO:0005829">
    <property type="term" value="C:cytosol"/>
    <property type="evidence" value="ECO:0007669"/>
    <property type="project" value="TreeGrafter"/>
</dbReference>
<dbReference type="CDD" id="cd01462">
    <property type="entry name" value="VWA_YIEM_type"/>
    <property type="match status" value="1"/>
</dbReference>
<dbReference type="Gene3D" id="3.40.50.410">
    <property type="entry name" value="von Willebrand factor, type A domain"/>
    <property type="match status" value="1"/>
</dbReference>
<dbReference type="HAMAP" id="MF_01626">
    <property type="entry name" value="ViaA"/>
    <property type="match status" value="1"/>
</dbReference>
<dbReference type="InterPro" id="IPR008912">
    <property type="entry name" value="Uncharacterised_CoxE"/>
</dbReference>
<dbReference type="InterPro" id="IPR023481">
    <property type="entry name" value="Uncharacterised_ViaA"/>
</dbReference>
<dbReference type="InterPro" id="IPR002035">
    <property type="entry name" value="VWF_A"/>
</dbReference>
<dbReference type="InterPro" id="IPR036465">
    <property type="entry name" value="vWFA_dom_sf"/>
</dbReference>
<dbReference type="NCBIfam" id="NF008230">
    <property type="entry name" value="PRK10997.1"/>
    <property type="match status" value="1"/>
</dbReference>
<dbReference type="PANTHER" id="PTHR36846">
    <property type="entry name" value="PROTEIN VIAA"/>
    <property type="match status" value="1"/>
</dbReference>
<dbReference type="PANTHER" id="PTHR36846:SF1">
    <property type="entry name" value="PROTEIN VIAA"/>
    <property type="match status" value="1"/>
</dbReference>
<dbReference type="Pfam" id="PF05762">
    <property type="entry name" value="VWA_CoxE"/>
    <property type="match status" value="1"/>
</dbReference>
<dbReference type="SMART" id="SM00327">
    <property type="entry name" value="VWA"/>
    <property type="match status" value="1"/>
</dbReference>
<dbReference type="SUPFAM" id="SSF53300">
    <property type="entry name" value="vWA-like"/>
    <property type="match status" value="1"/>
</dbReference>
<name>VIAA_SHIFL</name>
<reference key="1">
    <citation type="journal article" date="2002" name="Nucleic Acids Res.">
        <title>Genome sequence of Shigella flexneri 2a: insights into pathogenicity through comparison with genomes of Escherichia coli K12 and O157.</title>
        <authorList>
            <person name="Jin Q."/>
            <person name="Yuan Z."/>
            <person name="Xu J."/>
            <person name="Wang Y."/>
            <person name="Shen Y."/>
            <person name="Lu W."/>
            <person name="Wang J."/>
            <person name="Liu H."/>
            <person name="Yang J."/>
            <person name="Yang F."/>
            <person name="Zhang X."/>
            <person name="Zhang J."/>
            <person name="Yang G."/>
            <person name="Wu H."/>
            <person name="Qu D."/>
            <person name="Dong J."/>
            <person name="Sun L."/>
            <person name="Xue Y."/>
            <person name="Zhao A."/>
            <person name="Gao Y."/>
            <person name="Zhu J."/>
            <person name="Kan B."/>
            <person name="Ding K."/>
            <person name="Chen S."/>
            <person name="Cheng H."/>
            <person name="Yao Z."/>
            <person name="He B."/>
            <person name="Chen R."/>
            <person name="Ma D."/>
            <person name="Qiang B."/>
            <person name="Wen Y."/>
            <person name="Hou Y."/>
            <person name="Yu J."/>
        </authorList>
    </citation>
    <scope>NUCLEOTIDE SEQUENCE [LARGE SCALE GENOMIC DNA]</scope>
    <source>
        <strain>301 / Serotype 2a</strain>
    </source>
</reference>
<reference key="2">
    <citation type="journal article" date="2003" name="Infect. Immun.">
        <title>Complete genome sequence and comparative genomics of Shigella flexneri serotype 2a strain 2457T.</title>
        <authorList>
            <person name="Wei J."/>
            <person name="Goldberg M.B."/>
            <person name="Burland V."/>
            <person name="Venkatesan M.M."/>
            <person name="Deng W."/>
            <person name="Fournier G."/>
            <person name="Mayhew G.F."/>
            <person name="Plunkett G. III"/>
            <person name="Rose D.J."/>
            <person name="Darling A."/>
            <person name="Mau B."/>
            <person name="Perna N.T."/>
            <person name="Payne S.M."/>
            <person name="Runyen-Janecky L.J."/>
            <person name="Zhou S."/>
            <person name="Schwartz D.C."/>
            <person name="Blattner F.R."/>
        </authorList>
    </citation>
    <scope>NUCLEOTIDE SEQUENCE [LARGE SCALE GENOMIC DNA]</scope>
    <source>
        <strain>ATCC 700930 / 2457T / Serotype 2a</strain>
    </source>
</reference>
<gene>
    <name evidence="1" type="primary">viaA</name>
    <name type="ordered locus">SF3825</name>
    <name type="ordered locus">S3943</name>
</gene>
<protein>
    <recommendedName>
        <fullName evidence="1">Regulatory protein ViaA</fullName>
    </recommendedName>
    <alternativeName>
        <fullName evidence="1">VWA interacting with AAA+ ATPase</fullName>
    </alternativeName>
</protein>
<evidence type="ECO:0000255" key="1">
    <source>
        <dbReference type="HAMAP-Rule" id="MF_01626"/>
    </source>
</evidence>
<evidence type="ECO:0000305" key="2"/>
<accession>Q83IY2</accession>
<accession>Q7UB27</accession>
<proteinExistence type="inferred from homology"/>
<feature type="chain" id="PRO_0000196592" description="Regulatory protein ViaA">
    <location>
        <begin position="1"/>
        <end position="483"/>
    </location>
</feature>
<feature type="sequence conflict" description="In Ref. 2." evidence="2" ref="2">
    <original>M</original>
    <variation>MRSRLKDARVPPELTEEVM</variation>
    <location>
        <position position="75"/>
    </location>
</feature>
<feature type="sequence conflict" description="In Ref. 2; AAP18932." evidence="2" ref="2">
    <original>K</original>
    <variation>T</variation>
    <location>
        <position position="271"/>
    </location>
</feature>
<comment type="function">
    <text evidence="1">Component of the RavA-ViaA chaperone complex, which may act on the membrane to optimize the function of some of the respiratory chains. ViaA stimulates the ATPase activity of RavA.</text>
</comment>
<comment type="subunit">
    <text evidence="1">Homodimer. Interacts with RavA.</text>
</comment>
<comment type="subcellular location">
    <subcellularLocation>
        <location evidence="1">Cytoplasm</location>
    </subcellularLocation>
</comment>
<comment type="similarity">
    <text evidence="1">Belongs to the ViaA family.</text>
</comment>
<comment type="sequence caution" evidence="2">
    <conflict type="erroneous initiation">
        <sequence resource="EMBL-CDS" id="AAP18932"/>
    </conflict>
</comment>
<sequence length="483" mass="56002">MLTLDTLNVMLAVSEEGLIEEMIIALLASPQLAVFFEKFPRLKAAITDDVPRWREALRSRLKDARVPPELTEEVMCYQQSQLLSTPQFIVQLPQILDLLHRLNSPWAEQARQLVDANSTITSALHTLFLQRWRLSLIVQATTLNQQLLEEEREQLLSEVQERMTLSGQLEPILADNNTAAGRLWDMSAGQLKRGDYQFIVKYGEFLNEQPELKRLAEQLGRSREAKSIPRNDAQMETFRTMVREPATVPEQVDGLQQSDDILRLLPPELAKLGITELEYEFYRRLVEKQLLTYRLHGESWREKVFERPVVHKDYDEQPRGPFIVCVDTSGSMGGFNEQCAKAFCLALMRIALAENRRCYIMLFSTEIVRYELSGPQGIEQAIRFLSQQFRGGTDLASCFRAIMERLQSREWFDADAVVISDFIAQRLPDDVTSKVKELQRVHQHRFHAVAMSAHGKPGIMRIFDHIWRFDTGMRSRLLRRWRR</sequence>
<organism>
    <name type="scientific">Shigella flexneri</name>
    <dbReference type="NCBI Taxonomy" id="623"/>
    <lineage>
        <taxon>Bacteria</taxon>
        <taxon>Pseudomonadati</taxon>
        <taxon>Pseudomonadota</taxon>
        <taxon>Gammaproteobacteria</taxon>
        <taxon>Enterobacterales</taxon>
        <taxon>Enterobacteriaceae</taxon>
        <taxon>Shigella</taxon>
    </lineage>
</organism>
<keyword id="KW-0143">Chaperone</keyword>
<keyword id="KW-0963">Cytoplasm</keyword>
<keyword id="KW-1185">Reference proteome</keyword>